<reference key="1">
    <citation type="journal article" date="2009" name="BMC Genomics">
        <title>Analysis of the Rickettsia africae genome reveals that virulence acquisition in Rickettsia species may be explained by genome reduction.</title>
        <authorList>
            <person name="Fournier P.-E."/>
            <person name="El Karkouri K."/>
            <person name="Leroy Q."/>
            <person name="Robert C."/>
            <person name="Giumelli B."/>
            <person name="Renesto P."/>
            <person name="Socolovschi C."/>
            <person name="Parola P."/>
            <person name="Audic S."/>
            <person name="Raoult D."/>
        </authorList>
    </citation>
    <scope>NUCLEOTIDE SEQUENCE [LARGE SCALE GENOMIC DNA]</scope>
    <source>
        <strain>ESF-5</strain>
    </source>
</reference>
<gene>
    <name evidence="1" type="primary">tgt</name>
    <name type="ordered locus">RAF_ORF1005</name>
</gene>
<name>TGT_RICAE</name>
<feature type="chain" id="PRO_1000203662" description="Queuine tRNA-ribosyltransferase">
    <location>
        <begin position="1"/>
        <end position="361"/>
    </location>
</feature>
<feature type="region of interest" description="RNA binding" evidence="1">
    <location>
        <begin position="247"/>
        <end position="253"/>
    </location>
</feature>
<feature type="region of interest" description="RNA binding; important for wobble base 34 recognition" evidence="1">
    <location>
        <begin position="271"/>
        <end position="275"/>
    </location>
</feature>
<feature type="active site" description="Proton acceptor" evidence="1">
    <location>
        <position position="92"/>
    </location>
</feature>
<feature type="active site" description="Nucleophile" evidence="1">
    <location>
        <position position="266"/>
    </location>
</feature>
<feature type="binding site" evidence="1">
    <location>
        <begin position="92"/>
        <end position="96"/>
    </location>
    <ligand>
        <name>substrate</name>
    </ligand>
</feature>
<feature type="binding site" evidence="1">
    <location>
        <position position="146"/>
    </location>
    <ligand>
        <name>substrate</name>
    </ligand>
</feature>
<feature type="binding site" evidence="1">
    <location>
        <position position="189"/>
    </location>
    <ligand>
        <name>substrate</name>
    </ligand>
</feature>
<feature type="binding site" evidence="1">
    <location>
        <position position="216"/>
    </location>
    <ligand>
        <name>substrate</name>
    </ligand>
</feature>
<feature type="binding site" evidence="1">
    <location>
        <position position="304"/>
    </location>
    <ligand>
        <name>Zn(2+)</name>
        <dbReference type="ChEBI" id="CHEBI:29105"/>
    </ligand>
</feature>
<feature type="binding site" evidence="1">
    <location>
        <position position="306"/>
    </location>
    <ligand>
        <name>Zn(2+)</name>
        <dbReference type="ChEBI" id="CHEBI:29105"/>
    </ligand>
</feature>
<feature type="binding site" evidence="1">
    <location>
        <position position="309"/>
    </location>
    <ligand>
        <name>Zn(2+)</name>
        <dbReference type="ChEBI" id="CHEBI:29105"/>
    </ligand>
</feature>
<feature type="binding site" evidence="1">
    <location>
        <position position="335"/>
    </location>
    <ligand>
        <name>Zn(2+)</name>
        <dbReference type="ChEBI" id="CHEBI:29105"/>
    </ligand>
</feature>
<organism>
    <name type="scientific">Rickettsia africae (strain ESF-5)</name>
    <dbReference type="NCBI Taxonomy" id="347255"/>
    <lineage>
        <taxon>Bacteria</taxon>
        <taxon>Pseudomonadati</taxon>
        <taxon>Pseudomonadota</taxon>
        <taxon>Alphaproteobacteria</taxon>
        <taxon>Rickettsiales</taxon>
        <taxon>Rickettsiaceae</taxon>
        <taxon>Rickettsieae</taxon>
        <taxon>Rickettsia</taxon>
        <taxon>spotted fever group</taxon>
    </lineage>
</organism>
<sequence>MSKFSFNIHHQHKKARSGIIVTAHGEMRTPAFMPVGTRGTVKAMLPESVAETGADILLGNTYHLMLQPTAERIVQLGGLHKFMNWDKPILTDSGGFQVMSLSKLCKITEEGVSFSSHINGDKYMLTPERSTEIQYLLGSTITMAFDECTPYPATFEEAKTSMQLTTRWANRSRNAFVKREGYAQFGIIQGSVYEELREQSAKDLVELDFEGYAIGGLAVGEGQELMFKVLDYAPEFLPQNKPRYLMGVGKPVDIIGAVSRGIDMFDCVIPTRSGRNGQAFTKYGTVNIRNSKYADDNKPLEHDCLCPACRNYSKAYLHHLVRIGEILGSMLMTWHNLTYFQNLMSRIRAYIKLGKDFDFDS</sequence>
<protein>
    <recommendedName>
        <fullName evidence="1">Queuine tRNA-ribosyltransferase</fullName>
        <ecNumber evidence="1">2.4.2.29</ecNumber>
    </recommendedName>
    <alternativeName>
        <fullName evidence="1">Guanine insertion enzyme</fullName>
    </alternativeName>
    <alternativeName>
        <fullName evidence="1">tRNA-guanine transglycosylase</fullName>
    </alternativeName>
</protein>
<accession>C3PLJ4</accession>
<evidence type="ECO:0000255" key="1">
    <source>
        <dbReference type="HAMAP-Rule" id="MF_00168"/>
    </source>
</evidence>
<comment type="function">
    <text evidence="1">Catalyzes the base-exchange of a guanine (G) residue with the queuine precursor 7-aminomethyl-7-deazaguanine (PreQ1) at position 34 (anticodon wobble position) in tRNAs with GU(N) anticodons (tRNA-Asp, -Asn, -His and -Tyr). Catalysis occurs through a double-displacement mechanism. The nucleophile active site attacks the C1' of nucleotide 34 to detach the guanine base from the RNA, forming a covalent enzyme-RNA intermediate. The proton acceptor active site deprotonates the incoming PreQ1, allowing a nucleophilic attack on the C1' of the ribose to form the product. After dissociation, two additional enzymatic reactions on the tRNA convert PreQ1 to queuine (Q), resulting in the hypermodified nucleoside queuosine (7-(((4,5-cis-dihydroxy-2-cyclopenten-1-yl)amino)methyl)-7-deazaguanosine).</text>
</comment>
<comment type="catalytic activity">
    <reaction evidence="1">
        <text>7-aminomethyl-7-carbaguanine + guanosine(34) in tRNA = 7-aminomethyl-7-carbaguanosine(34) in tRNA + guanine</text>
        <dbReference type="Rhea" id="RHEA:24104"/>
        <dbReference type="Rhea" id="RHEA-COMP:10341"/>
        <dbReference type="Rhea" id="RHEA-COMP:10342"/>
        <dbReference type="ChEBI" id="CHEBI:16235"/>
        <dbReference type="ChEBI" id="CHEBI:58703"/>
        <dbReference type="ChEBI" id="CHEBI:74269"/>
        <dbReference type="ChEBI" id="CHEBI:82833"/>
        <dbReference type="EC" id="2.4.2.29"/>
    </reaction>
</comment>
<comment type="cofactor">
    <cofactor evidence="1">
        <name>Zn(2+)</name>
        <dbReference type="ChEBI" id="CHEBI:29105"/>
    </cofactor>
    <text evidence="1">Binds 1 zinc ion per subunit.</text>
</comment>
<comment type="pathway">
    <text evidence="1">tRNA modification; tRNA-queuosine biosynthesis.</text>
</comment>
<comment type="subunit">
    <text evidence="1">Homodimer. Within each dimer, one monomer is responsible for RNA recognition and catalysis, while the other monomer binds to the replacement base PreQ1.</text>
</comment>
<comment type="similarity">
    <text evidence="1">Belongs to the queuine tRNA-ribosyltransferase family.</text>
</comment>
<keyword id="KW-0328">Glycosyltransferase</keyword>
<keyword id="KW-0479">Metal-binding</keyword>
<keyword id="KW-0671">Queuosine biosynthesis</keyword>
<keyword id="KW-0808">Transferase</keyword>
<keyword id="KW-0819">tRNA processing</keyword>
<keyword id="KW-0862">Zinc</keyword>
<proteinExistence type="inferred from homology"/>
<dbReference type="EC" id="2.4.2.29" evidence="1"/>
<dbReference type="EMBL" id="CP001612">
    <property type="protein sequence ID" value="ACP53834.1"/>
    <property type="molecule type" value="Genomic_DNA"/>
</dbReference>
<dbReference type="RefSeq" id="WP_004997587.1">
    <property type="nucleotide sequence ID" value="NC_012633.1"/>
</dbReference>
<dbReference type="SMR" id="C3PLJ4"/>
<dbReference type="GeneID" id="95361547"/>
<dbReference type="KEGG" id="raf:RAF_ORF1005"/>
<dbReference type="HOGENOM" id="CLU_022060_0_1_5"/>
<dbReference type="UniPathway" id="UPA00392"/>
<dbReference type="Proteomes" id="UP000002305">
    <property type="component" value="Chromosome"/>
</dbReference>
<dbReference type="GO" id="GO:0005737">
    <property type="term" value="C:cytoplasm"/>
    <property type="evidence" value="ECO:0007669"/>
    <property type="project" value="TreeGrafter"/>
</dbReference>
<dbReference type="GO" id="GO:0046872">
    <property type="term" value="F:metal ion binding"/>
    <property type="evidence" value="ECO:0007669"/>
    <property type="project" value="UniProtKB-KW"/>
</dbReference>
<dbReference type="GO" id="GO:0008479">
    <property type="term" value="F:tRNA-guanosine(34) queuine transglycosylase activity"/>
    <property type="evidence" value="ECO:0007669"/>
    <property type="project" value="UniProtKB-UniRule"/>
</dbReference>
<dbReference type="GO" id="GO:0008616">
    <property type="term" value="P:queuosine biosynthetic process"/>
    <property type="evidence" value="ECO:0007669"/>
    <property type="project" value="UniProtKB-UniRule"/>
</dbReference>
<dbReference type="GO" id="GO:0002099">
    <property type="term" value="P:tRNA wobble guanine modification"/>
    <property type="evidence" value="ECO:0007669"/>
    <property type="project" value="TreeGrafter"/>
</dbReference>
<dbReference type="GO" id="GO:0101030">
    <property type="term" value="P:tRNA-guanine transglycosylation"/>
    <property type="evidence" value="ECO:0007669"/>
    <property type="project" value="InterPro"/>
</dbReference>
<dbReference type="FunFam" id="3.20.20.105:FF:000001">
    <property type="entry name" value="Queuine tRNA-ribosyltransferase"/>
    <property type="match status" value="1"/>
</dbReference>
<dbReference type="Gene3D" id="3.20.20.105">
    <property type="entry name" value="Queuine tRNA-ribosyltransferase-like"/>
    <property type="match status" value="1"/>
</dbReference>
<dbReference type="HAMAP" id="MF_00168">
    <property type="entry name" value="Q_tRNA_Tgt"/>
    <property type="match status" value="1"/>
</dbReference>
<dbReference type="InterPro" id="IPR050076">
    <property type="entry name" value="ArchSynthase1/Queuine_TRR"/>
</dbReference>
<dbReference type="InterPro" id="IPR004803">
    <property type="entry name" value="TGT"/>
</dbReference>
<dbReference type="InterPro" id="IPR036511">
    <property type="entry name" value="TGT-like_sf"/>
</dbReference>
<dbReference type="InterPro" id="IPR002616">
    <property type="entry name" value="tRNA_ribo_trans-like"/>
</dbReference>
<dbReference type="NCBIfam" id="TIGR00430">
    <property type="entry name" value="Q_tRNA_tgt"/>
    <property type="match status" value="1"/>
</dbReference>
<dbReference type="NCBIfam" id="TIGR00449">
    <property type="entry name" value="tgt_general"/>
    <property type="match status" value="1"/>
</dbReference>
<dbReference type="PANTHER" id="PTHR46499">
    <property type="entry name" value="QUEUINE TRNA-RIBOSYLTRANSFERASE"/>
    <property type="match status" value="1"/>
</dbReference>
<dbReference type="PANTHER" id="PTHR46499:SF1">
    <property type="entry name" value="QUEUINE TRNA-RIBOSYLTRANSFERASE"/>
    <property type="match status" value="1"/>
</dbReference>
<dbReference type="Pfam" id="PF01702">
    <property type="entry name" value="TGT"/>
    <property type="match status" value="1"/>
</dbReference>
<dbReference type="SUPFAM" id="SSF51713">
    <property type="entry name" value="tRNA-guanine transglycosylase"/>
    <property type="match status" value="1"/>
</dbReference>